<organism>
    <name type="scientific">Shewanella piezotolerans (strain WP3 / JCM 13877)</name>
    <dbReference type="NCBI Taxonomy" id="225849"/>
    <lineage>
        <taxon>Bacteria</taxon>
        <taxon>Pseudomonadati</taxon>
        <taxon>Pseudomonadota</taxon>
        <taxon>Gammaproteobacteria</taxon>
        <taxon>Alteromonadales</taxon>
        <taxon>Shewanellaceae</taxon>
        <taxon>Shewanella</taxon>
    </lineage>
</organism>
<gene>
    <name evidence="1" type="primary">fhs</name>
    <name type="ordered locus">swp_0551</name>
</gene>
<evidence type="ECO:0000255" key="1">
    <source>
        <dbReference type="HAMAP-Rule" id="MF_01543"/>
    </source>
</evidence>
<dbReference type="EC" id="6.3.4.3" evidence="1"/>
<dbReference type="EMBL" id="CP000472">
    <property type="protein sequence ID" value="ACJ27375.1"/>
    <property type="molecule type" value="Genomic_DNA"/>
</dbReference>
<dbReference type="RefSeq" id="WP_020910756.1">
    <property type="nucleotide sequence ID" value="NC_011566.1"/>
</dbReference>
<dbReference type="SMR" id="B8CI99"/>
<dbReference type="STRING" id="225849.swp_0551"/>
<dbReference type="KEGG" id="swp:swp_0551"/>
<dbReference type="eggNOG" id="COG2759">
    <property type="taxonomic scope" value="Bacteria"/>
</dbReference>
<dbReference type="HOGENOM" id="CLU_003601_3_3_6"/>
<dbReference type="OrthoDB" id="9761733at2"/>
<dbReference type="UniPathway" id="UPA00193"/>
<dbReference type="Proteomes" id="UP000000753">
    <property type="component" value="Chromosome"/>
</dbReference>
<dbReference type="GO" id="GO:0005524">
    <property type="term" value="F:ATP binding"/>
    <property type="evidence" value="ECO:0007669"/>
    <property type="project" value="UniProtKB-UniRule"/>
</dbReference>
<dbReference type="GO" id="GO:0004329">
    <property type="term" value="F:formate-tetrahydrofolate ligase activity"/>
    <property type="evidence" value="ECO:0007669"/>
    <property type="project" value="UniProtKB-UniRule"/>
</dbReference>
<dbReference type="GO" id="GO:0035999">
    <property type="term" value="P:tetrahydrofolate interconversion"/>
    <property type="evidence" value="ECO:0007669"/>
    <property type="project" value="UniProtKB-UniRule"/>
</dbReference>
<dbReference type="FunFam" id="3.10.410.10:FF:000001">
    <property type="entry name" value="Putative formate--tetrahydrofolate ligase"/>
    <property type="match status" value="1"/>
</dbReference>
<dbReference type="Gene3D" id="3.30.1510.10">
    <property type="entry name" value="Domain 2, N(10)-formyltetrahydrofolate synthetase"/>
    <property type="match status" value="1"/>
</dbReference>
<dbReference type="Gene3D" id="3.10.410.10">
    <property type="entry name" value="Formyltetrahydrofolate synthetase, domain 3"/>
    <property type="match status" value="1"/>
</dbReference>
<dbReference type="Gene3D" id="3.40.50.300">
    <property type="entry name" value="P-loop containing nucleotide triphosphate hydrolases"/>
    <property type="match status" value="1"/>
</dbReference>
<dbReference type="HAMAP" id="MF_01543">
    <property type="entry name" value="FTHFS"/>
    <property type="match status" value="1"/>
</dbReference>
<dbReference type="InterPro" id="IPR000559">
    <property type="entry name" value="Formate_THF_ligase"/>
</dbReference>
<dbReference type="InterPro" id="IPR020628">
    <property type="entry name" value="Formate_THF_ligase_CS"/>
</dbReference>
<dbReference type="InterPro" id="IPR027417">
    <property type="entry name" value="P-loop_NTPase"/>
</dbReference>
<dbReference type="NCBIfam" id="NF010030">
    <property type="entry name" value="PRK13505.1"/>
    <property type="match status" value="1"/>
</dbReference>
<dbReference type="NCBIfam" id="NF010031">
    <property type="entry name" value="PRK13506.1"/>
    <property type="match status" value="1"/>
</dbReference>
<dbReference type="Pfam" id="PF01268">
    <property type="entry name" value="FTHFS"/>
    <property type="match status" value="1"/>
</dbReference>
<dbReference type="SUPFAM" id="SSF52540">
    <property type="entry name" value="P-loop containing nucleoside triphosphate hydrolases"/>
    <property type="match status" value="1"/>
</dbReference>
<dbReference type="PROSITE" id="PS00721">
    <property type="entry name" value="FTHFS_1"/>
    <property type="match status" value="1"/>
</dbReference>
<dbReference type="PROSITE" id="PS00722">
    <property type="entry name" value="FTHFS_2"/>
    <property type="match status" value="1"/>
</dbReference>
<proteinExistence type="inferred from homology"/>
<reference key="1">
    <citation type="journal article" date="2008" name="PLoS ONE">
        <title>Environmental adaptation: genomic analysis of the piezotolerant and psychrotolerant deep-sea iron reducing bacterium Shewanella piezotolerans WP3.</title>
        <authorList>
            <person name="Wang F."/>
            <person name="Wang J."/>
            <person name="Jian H."/>
            <person name="Zhang B."/>
            <person name="Li S."/>
            <person name="Wang F."/>
            <person name="Zeng X."/>
            <person name="Gao L."/>
            <person name="Bartlett D.H."/>
            <person name="Yu J."/>
            <person name="Hu S."/>
            <person name="Xiao X."/>
        </authorList>
    </citation>
    <scope>NUCLEOTIDE SEQUENCE [LARGE SCALE GENOMIC DNA]</scope>
    <source>
        <strain>WP3 / JCM 13877</strain>
    </source>
</reference>
<name>FTHS_SHEPW</name>
<comment type="catalytic activity">
    <reaction evidence="1">
        <text>(6S)-5,6,7,8-tetrahydrofolate + formate + ATP = (6R)-10-formyltetrahydrofolate + ADP + phosphate</text>
        <dbReference type="Rhea" id="RHEA:20221"/>
        <dbReference type="ChEBI" id="CHEBI:15740"/>
        <dbReference type="ChEBI" id="CHEBI:30616"/>
        <dbReference type="ChEBI" id="CHEBI:43474"/>
        <dbReference type="ChEBI" id="CHEBI:57453"/>
        <dbReference type="ChEBI" id="CHEBI:195366"/>
        <dbReference type="ChEBI" id="CHEBI:456216"/>
        <dbReference type="EC" id="6.3.4.3"/>
    </reaction>
</comment>
<comment type="pathway">
    <text evidence="1">One-carbon metabolism; tetrahydrofolate interconversion.</text>
</comment>
<comment type="similarity">
    <text evidence="1">Belongs to the formate--tetrahydrofolate ligase family.</text>
</comment>
<sequence length="570" mass="60198">MLSDINISRKHVCKPIAEIATNLGIVESELSVHGANKAKISLSVTNRLASKPDAKLVIVTAVTPTPYGEGKTVTTVGLTQAMNAIGVKTCACIRQPSMGPVFGIKGGAAGGGYAQVVPMEELNLHLTGDIHAVSSAHNLAAAAIDARLFHETRLGAIAFTKESGLNAVNIDPENILWRRVVDHNERSLRQIEVGFGAVNGPVHSSGFDITKASELMAILALSRDVKDLRQRVGRLVLALDLVGKPITAEDIGVAGAMTVIMRDAIEPTLMQTLSGDPCFIHAGPFANIAHGNSSIIADSIASKLADVVVTEAGFGSDMGFEKFSNIKVRESGYKPSAAVVVVTLRALKANSGIESEVAIDQPDMARLEAGFANLQWHINNVHQYGAPVVVAINRFPTDTSAELDWLQAKVATTNAFGCAISDAFANGAQGAAELAKVVHAATMVESEFNCLYETTDTLESKLMTLAEVGYGAASVSLSDKAKLQLAWLHKQGYSELPVCIAKTPMSISHDPNVKGVPRNFELPINELRLNAGAGFITALVGKVMTMPGLGIKPGYLNIDIDADDEIIGLA</sequence>
<protein>
    <recommendedName>
        <fullName evidence="1">Formate--tetrahydrofolate ligase</fullName>
        <ecNumber evidence="1">6.3.4.3</ecNumber>
    </recommendedName>
    <alternativeName>
        <fullName evidence="1">Formyltetrahydrofolate synthetase</fullName>
        <shortName evidence="1">FHS</shortName>
        <shortName evidence="1">FTHFS</shortName>
    </alternativeName>
</protein>
<accession>B8CI99</accession>
<keyword id="KW-0067">ATP-binding</keyword>
<keyword id="KW-0436">Ligase</keyword>
<keyword id="KW-0547">Nucleotide-binding</keyword>
<keyword id="KW-0554">One-carbon metabolism</keyword>
<feature type="chain" id="PRO_1000196823" description="Formate--tetrahydrofolate ligase">
    <location>
        <begin position="1"/>
        <end position="570"/>
    </location>
</feature>
<feature type="binding site" evidence="1">
    <location>
        <begin position="65"/>
        <end position="72"/>
    </location>
    <ligand>
        <name>ATP</name>
        <dbReference type="ChEBI" id="CHEBI:30616"/>
    </ligand>
</feature>